<dbReference type="EMBL" id="EF067921">
    <property type="protein sequence ID" value="ABK20814.1"/>
    <property type="molecule type" value="Genomic_DNA"/>
</dbReference>
<dbReference type="RefSeq" id="YP_874591.1">
    <property type="nucleotide sequence ID" value="NC_008589.1"/>
</dbReference>
<dbReference type="SMR" id="A0T0X9"/>
<dbReference type="STRING" id="35128.A0T0X9"/>
<dbReference type="GeneID" id="4524754"/>
<dbReference type="InParanoid" id="A0T0X9"/>
<dbReference type="GO" id="GO:0009507">
    <property type="term" value="C:chloroplast"/>
    <property type="evidence" value="ECO:0007669"/>
    <property type="project" value="UniProtKB-SubCell"/>
</dbReference>
<dbReference type="GO" id="GO:0022627">
    <property type="term" value="C:cytosolic small ribosomal subunit"/>
    <property type="evidence" value="ECO:0000318"/>
    <property type="project" value="GO_Central"/>
</dbReference>
<dbReference type="GO" id="GO:0019843">
    <property type="term" value="F:rRNA binding"/>
    <property type="evidence" value="ECO:0007669"/>
    <property type="project" value="UniProtKB-UniRule"/>
</dbReference>
<dbReference type="GO" id="GO:0003735">
    <property type="term" value="F:structural constituent of ribosome"/>
    <property type="evidence" value="ECO:0000318"/>
    <property type="project" value="GO_Central"/>
</dbReference>
<dbReference type="GO" id="GO:0006412">
    <property type="term" value="P:translation"/>
    <property type="evidence" value="ECO:0007669"/>
    <property type="project" value="UniProtKB-UniRule"/>
</dbReference>
<dbReference type="CDD" id="cd02412">
    <property type="entry name" value="KH-II_30S_S3"/>
    <property type="match status" value="1"/>
</dbReference>
<dbReference type="FunFam" id="3.30.300.20:FF:000001">
    <property type="entry name" value="30S ribosomal protein S3"/>
    <property type="match status" value="1"/>
</dbReference>
<dbReference type="FunFam" id="3.30.1140.32:FF:000015">
    <property type="entry name" value="30S ribosomal protein S3, chloroplastic"/>
    <property type="match status" value="1"/>
</dbReference>
<dbReference type="Gene3D" id="3.30.300.20">
    <property type="match status" value="1"/>
</dbReference>
<dbReference type="Gene3D" id="3.30.1140.32">
    <property type="entry name" value="Ribosomal protein S3, C-terminal domain"/>
    <property type="match status" value="1"/>
</dbReference>
<dbReference type="HAMAP" id="MF_01309_B">
    <property type="entry name" value="Ribosomal_uS3_B"/>
    <property type="match status" value="1"/>
</dbReference>
<dbReference type="InterPro" id="IPR015946">
    <property type="entry name" value="KH_dom-like_a/b"/>
</dbReference>
<dbReference type="InterPro" id="IPR004044">
    <property type="entry name" value="KH_dom_type_2"/>
</dbReference>
<dbReference type="InterPro" id="IPR009019">
    <property type="entry name" value="KH_sf_prok-type"/>
</dbReference>
<dbReference type="InterPro" id="IPR036419">
    <property type="entry name" value="Ribosomal_S3_C_sf"/>
</dbReference>
<dbReference type="InterPro" id="IPR005704">
    <property type="entry name" value="Ribosomal_uS3_bac-typ"/>
</dbReference>
<dbReference type="InterPro" id="IPR001351">
    <property type="entry name" value="Ribosomal_uS3_C"/>
</dbReference>
<dbReference type="InterPro" id="IPR018280">
    <property type="entry name" value="Ribosomal_uS3_CS"/>
</dbReference>
<dbReference type="NCBIfam" id="TIGR01009">
    <property type="entry name" value="rpsC_bact"/>
    <property type="match status" value="1"/>
</dbReference>
<dbReference type="PANTHER" id="PTHR11760">
    <property type="entry name" value="30S/40S RIBOSOMAL PROTEIN S3"/>
    <property type="match status" value="1"/>
</dbReference>
<dbReference type="PANTHER" id="PTHR11760:SF19">
    <property type="entry name" value="SMALL RIBOSOMAL SUBUNIT PROTEIN US3C"/>
    <property type="match status" value="1"/>
</dbReference>
<dbReference type="Pfam" id="PF07650">
    <property type="entry name" value="KH_2"/>
    <property type="match status" value="1"/>
</dbReference>
<dbReference type="Pfam" id="PF00189">
    <property type="entry name" value="Ribosomal_S3_C"/>
    <property type="match status" value="1"/>
</dbReference>
<dbReference type="SUPFAM" id="SSF54814">
    <property type="entry name" value="Prokaryotic type KH domain (KH-domain type II)"/>
    <property type="match status" value="1"/>
</dbReference>
<dbReference type="SUPFAM" id="SSF54821">
    <property type="entry name" value="Ribosomal protein S3 C-terminal domain"/>
    <property type="match status" value="1"/>
</dbReference>
<dbReference type="PROSITE" id="PS50823">
    <property type="entry name" value="KH_TYPE_2"/>
    <property type="match status" value="1"/>
</dbReference>
<dbReference type="PROSITE" id="PS00548">
    <property type="entry name" value="RIBOSOMAL_S3"/>
    <property type="match status" value="1"/>
</dbReference>
<sequence>MGQKTHPLGFRLGITQEHRSAWYADFKHYSTLLEEDDKIRTYLNKLAKLASISDIHINRNGLGDQIELNIETGRPGILVGDNGSGIKTLATNIKKFIPNNRQITINVVEVENVNANASLIADLVVQQLEDRVAFRRAIREALQCLQDNQVNGIKVEVSGRLNGAEMARSEWIREGRVPLQTLRADIDYATKEANTIYGVLGVKVWLFKNEILKK</sequence>
<geneLocation type="chloroplast"/>
<comment type="subunit">
    <text evidence="1">Part of the 30S ribosomal subunit.</text>
</comment>
<comment type="subcellular location">
    <subcellularLocation>
        <location>Plastid</location>
        <location>Chloroplast</location>
    </subcellularLocation>
</comment>
<comment type="similarity">
    <text evidence="2">Belongs to the universal ribosomal protein uS3 family.</text>
</comment>
<keyword id="KW-0150">Chloroplast</keyword>
<keyword id="KW-0934">Plastid</keyword>
<keyword id="KW-0687">Ribonucleoprotein</keyword>
<keyword id="KW-0689">Ribosomal protein</keyword>
<keyword id="KW-0694">RNA-binding</keyword>
<keyword id="KW-0699">rRNA-binding</keyword>
<feature type="chain" id="PRO_0000277004" description="Small ribosomal subunit protein uS3c">
    <location>
        <begin position="1"/>
        <end position="214"/>
    </location>
</feature>
<feature type="domain" description="KH type-2">
    <location>
        <begin position="39"/>
        <end position="111"/>
    </location>
</feature>
<gene>
    <name type="primary">rps3</name>
</gene>
<name>RR3_THAPS</name>
<accession>A0T0X9</accession>
<reference key="1">
    <citation type="journal article" date="2007" name="Mol. Genet. Genomics">
        <title>Chloroplast genomes of the diatoms Phaeodactylum tricornutum and Thalassiosira pseudonana: comparison with other plastid genomes of the red lineage.</title>
        <authorList>
            <person name="Oudot-Le Secq M.-P."/>
            <person name="Grimwood J."/>
            <person name="Shapiro H."/>
            <person name="Armbrust E.V."/>
            <person name="Bowler C."/>
            <person name="Green B.R."/>
        </authorList>
    </citation>
    <scope>NUCLEOTIDE SEQUENCE [LARGE SCALE GENOMIC DNA]</scope>
    <source>
        <strain>CCMP1335 / NEPCC58 / CCAP 1085/12</strain>
    </source>
</reference>
<evidence type="ECO:0000250" key="1"/>
<evidence type="ECO:0000305" key="2"/>
<proteinExistence type="inferred from homology"/>
<organism>
    <name type="scientific">Thalassiosira pseudonana</name>
    <name type="common">Marine diatom</name>
    <name type="synonym">Cyclotella nana</name>
    <dbReference type="NCBI Taxonomy" id="35128"/>
    <lineage>
        <taxon>Eukaryota</taxon>
        <taxon>Sar</taxon>
        <taxon>Stramenopiles</taxon>
        <taxon>Ochrophyta</taxon>
        <taxon>Bacillariophyta</taxon>
        <taxon>Coscinodiscophyceae</taxon>
        <taxon>Thalassiosirophycidae</taxon>
        <taxon>Thalassiosirales</taxon>
        <taxon>Thalassiosiraceae</taxon>
        <taxon>Thalassiosira</taxon>
    </lineage>
</organism>
<protein>
    <recommendedName>
        <fullName evidence="2">Small ribosomal subunit protein uS3c</fullName>
    </recommendedName>
    <alternativeName>
        <fullName>30S ribosomal protein S3, chloroplastic</fullName>
    </alternativeName>
</protein>